<comment type="function">
    <text evidence="1 3">Methyltransferase; part of the gene cluster A that mediates the biosynthesis of the fungal meroterpenoid acetoxydehydroaustin (PubMed:29076725). The first step of the pathway is the synthesis of 3,5-dimethylorsellinic acid by the polyketide synthase ausA (By similarity). 3,5-dimethylorsellinic acid is then prenylated by the polyprenyl transferase ausN (By similarity). Further epoxidation by the FAD-dependent monooxygenase ausM and cyclization by the probable terpene cyclase ausL lead to the formation of protoaustinoid A (By similarity). Protoaustinoid A is then oxidized to spiro-lactone preaustinoid A3 by the combined action of the FAD-binding monooxygenases ausB and ausC, and the dioxygenase ausE (By similarity). Acid-catalyzed keto-rearrangement and ring contraction of the tetraketide portion of preaustinoid A3 by ausJ lead to the formation of preaustinoid A4 (By similarity). The aldo-keto reductase ausK, with the help of ausH, is involved in the next step by transforming preaustinoid A4 into isoaustinone which is in turn hydroxylated by the P450 monooxygenase ausI to form austinolide (By similarity). The cytochrome P450 monooxygenase ausG then modifies austinolide to austinol (By similarity). Austinol is further acetylated to austin by the O-acetyltransferase ausP, which spontaneously changes to dehydroaustin (PubMed:29076725). The cytochrome P450 monooxygenase then converts dehydroaustin is into 7-dehydrodehydroaustin (PubMed:29076725). The hydroxylation catalyzed by ausR permits the second O-acetyltransferase ausQ to add an additional acetyl group to the molecule, leading to the formation of acetoxydehydroaustin (PubMed:29076725). Due to genetic rearrangements of the clusters and the subsequent loss of some enzymes, the end product of the Penicillium brasilianum austinoid biosynthesis clusters is acetoxydehydroaustin (PubMed:29076725).</text>
</comment>
<comment type="pathway">
    <text evidence="6">Secondary metabolite biosynthesis; terpenoid biosynthesis.</text>
</comment>
<comment type="subunit">
    <text evidence="2">Homodimer.</text>
</comment>
<comment type="miscellaneous">
    <text evidence="6">In A.calidoustus, the austinoid gene cluster lies on a contiguous DNA region, while clusters from E.nidulans and P.brasilianum are split in their respective genomes. Genetic rearrangements provoked variability among the clusters and E.nidulans produces the least number of austionoid derivatives with the end products austinol and dehydroaustinol, while P.brasilianum can produce until acetoxydehydroaustin, and A.calidoustus produces the highest number of identified derivatives.</text>
</comment>
<comment type="similarity">
    <text evidence="5">Belongs to the class I-like SAM-binding methyltransferase superfamily.</text>
</comment>
<evidence type="ECO:0000250" key="1">
    <source>
        <dbReference type="UniProtKB" id="C8VE82"/>
    </source>
</evidence>
<evidence type="ECO:0000250" key="2">
    <source>
        <dbReference type="UniProtKB" id="Q3J7D1"/>
    </source>
</evidence>
<evidence type="ECO:0000269" key="3">
    <source>
    </source>
</evidence>
<evidence type="ECO:0000303" key="4">
    <source>
    </source>
</evidence>
<evidence type="ECO:0000305" key="5"/>
<evidence type="ECO:0000305" key="6">
    <source>
    </source>
</evidence>
<keyword id="KW-0489">Methyltransferase</keyword>
<keyword id="KW-1185">Reference proteome</keyword>
<keyword id="KW-0949">S-adenosyl-L-methionine</keyword>
<keyword id="KW-0808">Transferase</keyword>
<name>AUSD_PENBI</name>
<protein>
    <recommendedName>
        <fullName evidence="4">Methyltransferase ausD</fullName>
        <ecNumber evidence="6">2.1.3.-</ecNumber>
    </recommendedName>
    <alternativeName>
        <fullName evidence="4">Austinoid biosynthesis clusters protein D</fullName>
    </alternativeName>
</protein>
<dbReference type="EC" id="2.1.3.-" evidence="6"/>
<dbReference type="EMBL" id="CDHK01000010">
    <property type="protein sequence ID" value="CEJ61322.1"/>
    <property type="molecule type" value="Genomic_DNA"/>
</dbReference>
<dbReference type="SMR" id="A0A0F7U1Z8"/>
<dbReference type="STRING" id="104259.A0A0F7U1Z8"/>
<dbReference type="OrthoDB" id="2094832at2759"/>
<dbReference type="UniPathway" id="UPA00213"/>
<dbReference type="Proteomes" id="UP000042958">
    <property type="component" value="Unassembled WGS sequence"/>
</dbReference>
<dbReference type="GO" id="GO:0008168">
    <property type="term" value="F:methyltransferase activity"/>
    <property type="evidence" value="ECO:0007669"/>
    <property type="project" value="UniProtKB-KW"/>
</dbReference>
<dbReference type="GO" id="GO:0032259">
    <property type="term" value="P:methylation"/>
    <property type="evidence" value="ECO:0007669"/>
    <property type="project" value="UniProtKB-KW"/>
</dbReference>
<dbReference type="GO" id="GO:0016114">
    <property type="term" value="P:terpenoid biosynthetic process"/>
    <property type="evidence" value="ECO:0007669"/>
    <property type="project" value="UniProtKB-UniPathway"/>
</dbReference>
<dbReference type="Gene3D" id="3.40.50.150">
    <property type="entry name" value="Vaccinia Virus protein VP39"/>
    <property type="match status" value="1"/>
</dbReference>
<dbReference type="InterPro" id="IPR051654">
    <property type="entry name" value="Meroterpenoid_MTases"/>
</dbReference>
<dbReference type="InterPro" id="IPR029063">
    <property type="entry name" value="SAM-dependent_MTases_sf"/>
</dbReference>
<dbReference type="PANTHER" id="PTHR35897">
    <property type="entry name" value="METHYLTRANSFERASE AUSD"/>
    <property type="match status" value="1"/>
</dbReference>
<dbReference type="PANTHER" id="PTHR35897:SF1">
    <property type="entry name" value="METHYLTRANSFERASE AUSD"/>
    <property type="match status" value="1"/>
</dbReference>
<dbReference type="SUPFAM" id="SSF53335">
    <property type="entry name" value="S-adenosyl-L-methionine-dependent methyltransferases"/>
    <property type="match status" value="1"/>
</dbReference>
<feature type="chain" id="PRO_0000453851" description="Methyltransferase ausD">
    <location>
        <begin position="1"/>
        <end position="279"/>
    </location>
</feature>
<feature type="binding site" evidence="2">
    <location>
        <begin position="124"/>
        <end position="125"/>
    </location>
    <ligand>
        <name>S-adenosyl-L-methionine</name>
        <dbReference type="ChEBI" id="CHEBI:59789"/>
    </ligand>
</feature>
<feature type="binding site" evidence="2">
    <location>
        <begin position="152"/>
        <end position="153"/>
    </location>
    <ligand>
        <name>S-adenosyl-L-methionine</name>
        <dbReference type="ChEBI" id="CHEBI:59789"/>
    </ligand>
</feature>
<sequence>MHPDAQLKTALKNGFDPKLLYKEPLTTVKEPVCSILEKHSKVPVDKVVSHVNEVRDRAFAVFPYACIGQFSFVELSIADSPCYREMLERTKQGHKLLDLGCAFGQELRQLIYDGTPPTNLYGSDIQQDFLNLGYELFLDRAILPDSQLIAADVLDKQSALFERLAGELNIVYISLFLHVFDFEKQITVAQNVLDLLKAEPGSMIVCRVTACRDQEVLAATQERMPYYYHDLASWNRLWEEVKKQTGVKLSVESWEQPDELVKKHPLPGIYILGSSIRRL</sequence>
<proteinExistence type="inferred from homology"/>
<accession>A0A0F7U1Z8</accession>
<reference key="1">
    <citation type="journal article" date="2015" name="Genome Announc.">
        <title>Draft genome sequence of the fungus Penicillium brasilianum MG11.</title>
        <authorList>
            <person name="Horn F."/>
            <person name="Linde J."/>
            <person name="Mattern D.J."/>
            <person name="Walther G."/>
            <person name="Guthke R."/>
            <person name="Brakhage A.A."/>
            <person name="Valiante V."/>
        </authorList>
    </citation>
    <scope>NUCLEOTIDE SEQUENCE [LARGE SCALE GENOMIC DNA]</scope>
    <source>
        <strain>MG11</strain>
    </source>
</reference>
<reference key="2">
    <citation type="journal article" date="2016" name="J. Am. Chem. Soc.">
        <title>Discovery of key dioxygenases that diverged the paraherquonin and acetoxydehydroaustin pathways in Penicillium brasilianum.</title>
        <authorList>
            <person name="Matsuda Y."/>
            <person name="Iwabuchi T."/>
            <person name="Fujimoto T."/>
            <person name="Awakawa T."/>
            <person name="Nakashima Y."/>
            <person name="Mori T."/>
            <person name="Zhang H."/>
            <person name="Hayashi F."/>
            <person name="Abe I."/>
        </authorList>
    </citation>
    <scope>FUNCTION</scope>
</reference>
<reference key="3">
    <citation type="journal article" date="2017" name="ACS Chem. Biol.">
        <title>Rewiring of the austinoid biosynthetic pathway in filamentous fungi.</title>
        <authorList>
            <person name="Mattern D.J."/>
            <person name="Valiante V."/>
            <person name="Horn F."/>
            <person name="Petzke L."/>
            <person name="Brakhage A.A."/>
        </authorList>
    </citation>
    <scope>FUNCTION</scope>
</reference>
<gene>
    <name evidence="4" type="primary">ausD</name>
    <name type="ORF">PMG11_09857</name>
</gene>
<organism>
    <name type="scientific">Penicillium brasilianum</name>
    <dbReference type="NCBI Taxonomy" id="104259"/>
    <lineage>
        <taxon>Eukaryota</taxon>
        <taxon>Fungi</taxon>
        <taxon>Dikarya</taxon>
        <taxon>Ascomycota</taxon>
        <taxon>Pezizomycotina</taxon>
        <taxon>Eurotiomycetes</taxon>
        <taxon>Eurotiomycetidae</taxon>
        <taxon>Eurotiales</taxon>
        <taxon>Aspergillaceae</taxon>
        <taxon>Penicillium</taxon>
    </lineage>
</organism>